<protein>
    <recommendedName>
        <fullName evidence="1">Probable septum site-determining protein MinC</fullName>
    </recommendedName>
</protein>
<evidence type="ECO:0000255" key="1">
    <source>
        <dbReference type="HAMAP-Rule" id="MF_00267"/>
    </source>
</evidence>
<gene>
    <name evidence="1" type="primary">minC</name>
    <name type="ordered locus">Oant_2970</name>
</gene>
<keyword id="KW-0131">Cell cycle</keyword>
<keyword id="KW-0132">Cell division</keyword>
<keyword id="KW-1185">Reference proteome</keyword>
<keyword id="KW-0717">Septation</keyword>
<sequence length="242" mass="26143">MNQVLTQSRPIRLKGRSFLALVLSPELPLDGWLDKLDDLAARSVGFFLNRPIVLDLENVSIERPQLVQLLEDLVKRGVWITGFENARPSLLGPGMPPAMRGGQPAADFDPEITEPKSQERTPVAPASVQLVKAVPSMVVTEPVRSGQSVYFPDGDVTIVGSVASGAEVVAGGSIHVYGALRGRAMAGTAGNADARIFCRKMEAELVAIDGLYKTAEDMESRLRGQAVQLWLDGDYMMAETLN</sequence>
<accession>A6X374</accession>
<organism>
    <name type="scientific">Brucella anthropi (strain ATCC 49188 / DSM 6882 / CCUG 24695 / JCM 21032 / LMG 3331 / NBRC 15819 / NCTC 12168 / Alc 37)</name>
    <name type="common">Ochrobactrum anthropi</name>
    <dbReference type="NCBI Taxonomy" id="439375"/>
    <lineage>
        <taxon>Bacteria</taxon>
        <taxon>Pseudomonadati</taxon>
        <taxon>Pseudomonadota</taxon>
        <taxon>Alphaproteobacteria</taxon>
        <taxon>Hyphomicrobiales</taxon>
        <taxon>Brucellaceae</taxon>
        <taxon>Brucella/Ochrobactrum group</taxon>
        <taxon>Brucella</taxon>
    </lineage>
</organism>
<proteinExistence type="inferred from homology"/>
<name>MINC_BRUA4</name>
<feature type="chain" id="PRO_1000047838" description="Probable septum site-determining protein MinC">
    <location>
        <begin position="1"/>
        <end position="242"/>
    </location>
</feature>
<comment type="function">
    <text evidence="1">Cell division inhibitor that blocks the formation of polar Z ring septums. Rapidly oscillates between the poles of the cell to destabilize FtsZ filaments that have formed before they mature into polar Z rings. Prevents FtsZ polymerization.</text>
</comment>
<comment type="subunit">
    <text evidence="1">Interacts with MinD and FtsZ.</text>
</comment>
<comment type="similarity">
    <text evidence="1">Belongs to the MinC family.</text>
</comment>
<reference key="1">
    <citation type="journal article" date="2011" name="J. Bacteriol.">
        <title>Genome of Ochrobactrum anthropi ATCC 49188 T, a versatile opportunistic pathogen and symbiont of several eukaryotic hosts.</title>
        <authorList>
            <person name="Chain P.S."/>
            <person name="Lang D.M."/>
            <person name="Comerci D.J."/>
            <person name="Malfatti S.A."/>
            <person name="Vergez L.M."/>
            <person name="Shin M."/>
            <person name="Ugalde R.A."/>
            <person name="Garcia E."/>
            <person name="Tolmasky M.E."/>
        </authorList>
    </citation>
    <scope>NUCLEOTIDE SEQUENCE [LARGE SCALE GENOMIC DNA]</scope>
    <source>
        <strain>ATCC 49188 / DSM 6882 / CCUG 24695 / JCM 21032 / LMG 3331 / NBRC 15819 / NCTC 12168 / Alc 37</strain>
    </source>
</reference>
<dbReference type="EMBL" id="CP000759">
    <property type="protein sequence ID" value="ABS15678.1"/>
    <property type="molecule type" value="Genomic_DNA"/>
</dbReference>
<dbReference type="RefSeq" id="WP_010660935.1">
    <property type="nucleotide sequence ID" value="NC_009668.1"/>
</dbReference>
<dbReference type="SMR" id="A6X374"/>
<dbReference type="STRING" id="439375.Oant_2970"/>
<dbReference type="GeneID" id="61315778"/>
<dbReference type="KEGG" id="oan:Oant_2970"/>
<dbReference type="eggNOG" id="COG0850">
    <property type="taxonomic scope" value="Bacteria"/>
</dbReference>
<dbReference type="HOGENOM" id="CLU_067812_1_0_5"/>
<dbReference type="Proteomes" id="UP000002301">
    <property type="component" value="Chromosome 2"/>
</dbReference>
<dbReference type="GO" id="GO:0000902">
    <property type="term" value="P:cell morphogenesis"/>
    <property type="evidence" value="ECO:0007669"/>
    <property type="project" value="InterPro"/>
</dbReference>
<dbReference type="GO" id="GO:0000917">
    <property type="term" value="P:division septum assembly"/>
    <property type="evidence" value="ECO:0007669"/>
    <property type="project" value="UniProtKB-KW"/>
</dbReference>
<dbReference type="GO" id="GO:1901891">
    <property type="term" value="P:regulation of cell septum assembly"/>
    <property type="evidence" value="ECO:0007669"/>
    <property type="project" value="InterPro"/>
</dbReference>
<dbReference type="Gene3D" id="2.160.20.70">
    <property type="match status" value="1"/>
</dbReference>
<dbReference type="Gene3D" id="3.30.70.260">
    <property type="match status" value="1"/>
</dbReference>
<dbReference type="HAMAP" id="MF_00267">
    <property type="entry name" value="MinC"/>
    <property type="match status" value="1"/>
</dbReference>
<dbReference type="InterPro" id="IPR016098">
    <property type="entry name" value="CAP/MinC_C"/>
</dbReference>
<dbReference type="InterPro" id="IPR013033">
    <property type="entry name" value="MinC"/>
</dbReference>
<dbReference type="InterPro" id="IPR036145">
    <property type="entry name" value="MinC_C_sf"/>
</dbReference>
<dbReference type="InterPro" id="IPR005526">
    <property type="entry name" value="Septum_form_inhib_MinC_C"/>
</dbReference>
<dbReference type="NCBIfam" id="TIGR01222">
    <property type="entry name" value="minC"/>
    <property type="match status" value="1"/>
</dbReference>
<dbReference type="PANTHER" id="PTHR34108">
    <property type="entry name" value="SEPTUM SITE-DETERMINING PROTEIN MINC"/>
    <property type="match status" value="1"/>
</dbReference>
<dbReference type="PANTHER" id="PTHR34108:SF1">
    <property type="entry name" value="SEPTUM SITE-DETERMINING PROTEIN MINC"/>
    <property type="match status" value="1"/>
</dbReference>
<dbReference type="Pfam" id="PF03775">
    <property type="entry name" value="MinC_C"/>
    <property type="match status" value="1"/>
</dbReference>
<dbReference type="SUPFAM" id="SSF63848">
    <property type="entry name" value="Cell-division inhibitor MinC, C-terminal domain"/>
    <property type="match status" value="1"/>
</dbReference>